<protein>
    <recommendedName>
        <fullName evidence="1">UvrABC system protein C</fullName>
        <shortName evidence="1">Protein UvrC</shortName>
    </recommendedName>
    <alternativeName>
        <fullName evidence="1">Excinuclease ABC subunit C</fullName>
    </alternativeName>
</protein>
<gene>
    <name evidence="1" type="primary">uvrC</name>
    <name type="ordered locus">CD630_34100</name>
</gene>
<keyword id="KW-0963">Cytoplasm</keyword>
<keyword id="KW-0227">DNA damage</keyword>
<keyword id="KW-0228">DNA excision</keyword>
<keyword id="KW-0234">DNA repair</keyword>
<keyword id="KW-0267">Excision nuclease</keyword>
<keyword id="KW-1185">Reference proteome</keyword>
<keyword id="KW-0742">SOS response</keyword>
<organism>
    <name type="scientific">Clostridioides difficile (strain 630)</name>
    <name type="common">Peptoclostridium difficile</name>
    <dbReference type="NCBI Taxonomy" id="272563"/>
    <lineage>
        <taxon>Bacteria</taxon>
        <taxon>Bacillati</taxon>
        <taxon>Bacillota</taxon>
        <taxon>Clostridia</taxon>
        <taxon>Peptostreptococcales</taxon>
        <taxon>Peptostreptococcaceae</taxon>
        <taxon>Clostridioides</taxon>
    </lineage>
</organism>
<name>UVRC_CLOD6</name>
<accession>Q180Q8</accession>
<sequence>MFDIQEHLKKLPSEPGVYLMKDKYDHIIYVGKAISLKNRVRQYFQSSKNHTSKVKSMVKNIYKFEYIITDSELEALILECNLIKRYRPKYNVVLRDDKTYPYIKVTTNEDYPRILKVRRVLKDKAKYFGPYTNITAVNDTLELISSTYPIRSCKIDIDKAIKNKTRPCLNLHINKCLGPCTGNVSKEEYGKMIEEIIMCLSGKEEKLMELLKEKMNESSMNFRFEEAAVYRDKIKSLEEMIQKQKIDATVSDLNQDVVAMARAHNEACVQVFFIRNGKIVGREHFILEGVMDSPRASILSSFVKQFYNEQEYIPKELIIEDEIEDSSILEEWLSSKKGQKVTIRVPQKGEKKSLVEMVRKNAVEYLEKFSDMNKRKYEKSIGALEELKQILNLEKLPIRIEAYDISNIQGVDSIGSMVVYTNAKKDKKEYRRYKIKTVIGPNDYDSMAEIVDRRLKHGNLPDLILLDGGKGQVSAVKKVLELNDVDIPLWGMYKDDKHRTKGLICKEKEIELDKTTNLYRFIASIQEEVHNYAITYHRSLRNKALTKSILDDIQGIGEKRKKSLLNHFKDVDAIKKATMEELLEVDGMNKSIADNVYNFFRKEEN</sequence>
<proteinExistence type="inferred from homology"/>
<evidence type="ECO:0000255" key="1">
    <source>
        <dbReference type="HAMAP-Rule" id="MF_00203"/>
    </source>
</evidence>
<comment type="function">
    <text evidence="1">The UvrABC repair system catalyzes the recognition and processing of DNA lesions. UvrC both incises the 5' and 3' sides of the lesion. The N-terminal half is responsible for the 3' incision and the C-terminal half is responsible for the 5' incision.</text>
</comment>
<comment type="subunit">
    <text evidence="1">Interacts with UvrB in an incision complex.</text>
</comment>
<comment type="subcellular location">
    <subcellularLocation>
        <location evidence="1">Cytoplasm</location>
    </subcellularLocation>
</comment>
<comment type="similarity">
    <text evidence="1">Belongs to the UvrC family.</text>
</comment>
<dbReference type="EMBL" id="AM180355">
    <property type="protein sequence ID" value="CAJ70313.1"/>
    <property type="molecule type" value="Genomic_DNA"/>
</dbReference>
<dbReference type="RefSeq" id="WP_003436264.1">
    <property type="nucleotide sequence ID" value="NZ_JAUPES010000002.1"/>
</dbReference>
<dbReference type="RefSeq" id="YP_001089930.1">
    <property type="nucleotide sequence ID" value="NC_009089.1"/>
</dbReference>
<dbReference type="SMR" id="Q180Q8"/>
<dbReference type="STRING" id="272563.CD630_34100"/>
<dbReference type="EnsemblBacteria" id="CAJ70313">
    <property type="protein sequence ID" value="CAJ70313"/>
    <property type="gene ID" value="CD630_34100"/>
</dbReference>
<dbReference type="GeneID" id="66355867"/>
<dbReference type="KEGG" id="cdf:CD630_34100"/>
<dbReference type="KEGG" id="pdc:CDIF630_03715"/>
<dbReference type="PATRIC" id="fig|272563.120.peg.3604"/>
<dbReference type="eggNOG" id="COG0322">
    <property type="taxonomic scope" value="Bacteria"/>
</dbReference>
<dbReference type="OrthoDB" id="9804933at2"/>
<dbReference type="PhylomeDB" id="Q180Q8"/>
<dbReference type="BioCyc" id="PDIF272563:G12WB-3584-MONOMER"/>
<dbReference type="Proteomes" id="UP000001978">
    <property type="component" value="Chromosome"/>
</dbReference>
<dbReference type="GO" id="GO:0005737">
    <property type="term" value="C:cytoplasm"/>
    <property type="evidence" value="ECO:0007669"/>
    <property type="project" value="UniProtKB-SubCell"/>
</dbReference>
<dbReference type="GO" id="GO:0009380">
    <property type="term" value="C:excinuclease repair complex"/>
    <property type="evidence" value="ECO:0007669"/>
    <property type="project" value="InterPro"/>
</dbReference>
<dbReference type="GO" id="GO:0003677">
    <property type="term" value="F:DNA binding"/>
    <property type="evidence" value="ECO:0007669"/>
    <property type="project" value="UniProtKB-UniRule"/>
</dbReference>
<dbReference type="GO" id="GO:0009381">
    <property type="term" value="F:excinuclease ABC activity"/>
    <property type="evidence" value="ECO:0007669"/>
    <property type="project" value="UniProtKB-UniRule"/>
</dbReference>
<dbReference type="GO" id="GO:0006289">
    <property type="term" value="P:nucleotide-excision repair"/>
    <property type="evidence" value="ECO:0007669"/>
    <property type="project" value="UniProtKB-UniRule"/>
</dbReference>
<dbReference type="GO" id="GO:0009432">
    <property type="term" value="P:SOS response"/>
    <property type="evidence" value="ECO:0007669"/>
    <property type="project" value="UniProtKB-UniRule"/>
</dbReference>
<dbReference type="CDD" id="cd10434">
    <property type="entry name" value="GIY-YIG_UvrC_Cho"/>
    <property type="match status" value="1"/>
</dbReference>
<dbReference type="FunFam" id="3.40.1440.10:FF:000001">
    <property type="entry name" value="UvrABC system protein C"/>
    <property type="match status" value="1"/>
</dbReference>
<dbReference type="Gene3D" id="1.10.150.20">
    <property type="entry name" value="5' to 3' exonuclease, C-terminal subdomain"/>
    <property type="match status" value="1"/>
</dbReference>
<dbReference type="Gene3D" id="3.40.1440.10">
    <property type="entry name" value="GIY-YIG endonuclease"/>
    <property type="match status" value="1"/>
</dbReference>
<dbReference type="Gene3D" id="4.10.860.10">
    <property type="entry name" value="UVR domain"/>
    <property type="match status" value="1"/>
</dbReference>
<dbReference type="Gene3D" id="3.30.420.340">
    <property type="entry name" value="UvrC, RNAse H endonuclease domain"/>
    <property type="match status" value="1"/>
</dbReference>
<dbReference type="HAMAP" id="MF_00203">
    <property type="entry name" value="UvrC"/>
    <property type="match status" value="1"/>
</dbReference>
<dbReference type="InterPro" id="IPR041663">
    <property type="entry name" value="DisA/LigA_HHH"/>
</dbReference>
<dbReference type="InterPro" id="IPR000305">
    <property type="entry name" value="GIY-YIG_endonuc"/>
</dbReference>
<dbReference type="InterPro" id="IPR035901">
    <property type="entry name" value="GIY-YIG_endonuc_sf"/>
</dbReference>
<dbReference type="InterPro" id="IPR047296">
    <property type="entry name" value="GIY-YIG_UvrC_Cho"/>
</dbReference>
<dbReference type="InterPro" id="IPR003583">
    <property type="entry name" value="Hlx-hairpin-Hlx_DNA-bd_motif"/>
</dbReference>
<dbReference type="InterPro" id="IPR010994">
    <property type="entry name" value="RuvA_2-like"/>
</dbReference>
<dbReference type="InterPro" id="IPR001943">
    <property type="entry name" value="UVR_dom"/>
</dbReference>
<dbReference type="InterPro" id="IPR036876">
    <property type="entry name" value="UVR_dom_sf"/>
</dbReference>
<dbReference type="InterPro" id="IPR050066">
    <property type="entry name" value="UvrABC_protein_C"/>
</dbReference>
<dbReference type="InterPro" id="IPR004791">
    <property type="entry name" value="UvrC"/>
</dbReference>
<dbReference type="InterPro" id="IPR001162">
    <property type="entry name" value="UvrC_RNase_H_dom"/>
</dbReference>
<dbReference type="InterPro" id="IPR038476">
    <property type="entry name" value="UvrC_RNase_H_dom_sf"/>
</dbReference>
<dbReference type="NCBIfam" id="TIGR00194">
    <property type="entry name" value="uvrC"/>
    <property type="match status" value="1"/>
</dbReference>
<dbReference type="PANTHER" id="PTHR30562:SF1">
    <property type="entry name" value="UVRABC SYSTEM PROTEIN C"/>
    <property type="match status" value="1"/>
</dbReference>
<dbReference type="PANTHER" id="PTHR30562">
    <property type="entry name" value="UVRC/OXIDOREDUCTASE"/>
    <property type="match status" value="1"/>
</dbReference>
<dbReference type="Pfam" id="PF01541">
    <property type="entry name" value="GIY-YIG"/>
    <property type="match status" value="1"/>
</dbReference>
<dbReference type="Pfam" id="PF12826">
    <property type="entry name" value="HHH_2"/>
    <property type="match status" value="1"/>
</dbReference>
<dbReference type="Pfam" id="PF02151">
    <property type="entry name" value="UVR"/>
    <property type="match status" value="1"/>
</dbReference>
<dbReference type="Pfam" id="PF22920">
    <property type="entry name" value="UvrC_RNaseH"/>
    <property type="match status" value="1"/>
</dbReference>
<dbReference type="Pfam" id="PF08459">
    <property type="entry name" value="UvrC_RNaseH_dom"/>
    <property type="match status" value="1"/>
</dbReference>
<dbReference type="SMART" id="SM00465">
    <property type="entry name" value="GIYc"/>
    <property type="match status" value="1"/>
</dbReference>
<dbReference type="SMART" id="SM00278">
    <property type="entry name" value="HhH1"/>
    <property type="match status" value="2"/>
</dbReference>
<dbReference type="SUPFAM" id="SSF46600">
    <property type="entry name" value="C-terminal UvrC-binding domain of UvrB"/>
    <property type="match status" value="1"/>
</dbReference>
<dbReference type="SUPFAM" id="SSF82771">
    <property type="entry name" value="GIY-YIG endonuclease"/>
    <property type="match status" value="1"/>
</dbReference>
<dbReference type="SUPFAM" id="SSF47781">
    <property type="entry name" value="RuvA domain 2-like"/>
    <property type="match status" value="1"/>
</dbReference>
<dbReference type="PROSITE" id="PS50164">
    <property type="entry name" value="GIY_YIG"/>
    <property type="match status" value="1"/>
</dbReference>
<dbReference type="PROSITE" id="PS50151">
    <property type="entry name" value="UVR"/>
    <property type="match status" value="1"/>
</dbReference>
<dbReference type="PROSITE" id="PS50165">
    <property type="entry name" value="UVRC"/>
    <property type="match status" value="1"/>
</dbReference>
<reference key="1">
    <citation type="journal article" date="2006" name="Nat. Genet.">
        <title>The multidrug-resistant human pathogen Clostridium difficile has a highly mobile, mosaic genome.</title>
        <authorList>
            <person name="Sebaihia M."/>
            <person name="Wren B.W."/>
            <person name="Mullany P."/>
            <person name="Fairweather N.F."/>
            <person name="Minton N."/>
            <person name="Stabler R."/>
            <person name="Thomson N.R."/>
            <person name="Roberts A.P."/>
            <person name="Cerdeno-Tarraga A.M."/>
            <person name="Wang H."/>
            <person name="Holden M.T.G."/>
            <person name="Wright A."/>
            <person name="Churcher C."/>
            <person name="Quail M.A."/>
            <person name="Baker S."/>
            <person name="Bason N."/>
            <person name="Brooks K."/>
            <person name="Chillingworth T."/>
            <person name="Cronin A."/>
            <person name="Davis P."/>
            <person name="Dowd L."/>
            <person name="Fraser A."/>
            <person name="Feltwell T."/>
            <person name="Hance Z."/>
            <person name="Holroyd S."/>
            <person name="Jagels K."/>
            <person name="Moule S."/>
            <person name="Mungall K."/>
            <person name="Price C."/>
            <person name="Rabbinowitsch E."/>
            <person name="Sharp S."/>
            <person name="Simmonds M."/>
            <person name="Stevens K."/>
            <person name="Unwin L."/>
            <person name="Whithead S."/>
            <person name="Dupuy B."/>
            <person name="Dougan G."/>
            <person name="Barrell B."/>
            <person name="Parkhill J."/>
        </authorList>
    </citation>
    <scope>NUCLEOTIDE SEQUENCE [LARGE SCALE GENOMIC DNA]</scope>
    <source>
        <strain>630</strain>
    </source>
</reference>
<feature type="chain" id="PRO_0000264884" description="UvrABC system protein C">
    <location>
        <begin position="1"/>
        <end position="605"/>
    </location>
</feature>
<feature type="domain" description="GIY-YIG" evidence="1">
    <location>
        <begin position="13"/>
        <end position="92"/>
    </location>
</feature>
<feature type="domain" description="UVR" evidence="1">
    <location>
        <begin position="205"/>
        <end position="240"/>
    </location>
</feature>